<feature type="chain" id="PRO_1000084076" description="Imidazole glycerol phosphate synthase subunit HisF">
    <location>
        <begin position="1"/>
        <end position="258"/>
    </location>
</feature>
<feature type="active site" evidence="1">
    <location>
        <position position="11"/>
    </location>
</feature>
<feature type="active site" evidence="1">
    <location>
        <position position="130"/>
    </location>
</feature>
<name>HIS6_SALPB</name>
<reference key="1">
    <citation type="submission" date="2007-11" db="EMBL/GenBank/DDBJ databases">
        <authorList>
            <consortium name="The Salmonella enterica serovar Paratyphi B Genome Sequencing Project"/>
            <person name="McClelland M."/>
            <person name="Sanderson E.K."/>
            <person name="Porwollik S."/>
            <person name="Spieth J."/>
            <person name="Clifton W.S."/>
            <person name="Fulton R."/>
            <person name="Cordes M."/>
            <person name="Wollam A."/>
            <person name="Shah N."/>
            <person name="Pepin K."/>
            <person name="Bhonagiri V."/>
            <person name="Nash W."/>
            <person name="Johnson M."/>
            <person name="Thiruvilangam P."/>
            <person name="Wilson R."/>
        </authorList>
    </citation>
    <scope>NUCLEOTIDE SEQUENCE [LARGE SCALE GENOMIC DNA]</scope>
    <source>
        <strain>ATCC BAA-1250 / SPB7</strain>
    </source>
</reference>
<sequence>MLAKRIIPCLDVRDGQVVKGVQFRNHEIIGDIVPLAKRYADEGADELVFYDITASSDGRVVDKSWVARVAEVIDIPFCVAGGIRSIDDAAKILSFGADKISINSPALADPTLITRLADRFGVQCIVVGIDTWFDDATGKYHVNQYTGDENRTRVTQWETLDWVQEVQQRGAGEIVLNMMNQDGVRNGYDLTQLKKVRDVCRVPLIASGGAGTMEHFLEAFRDADVDGALAASVFHKQIINIGELKAYLAGQGVEIRIC</sequence>
<proteinExistence type="inferred from homology"/>
<accession>A9N7S0</accession>
<protein>
    <recommendedName>
        <fullName evidence="1">Imidazole glycerol phosphate synthase subunit HisF</fullName>
        <ecNumber evidence="1">4.3.2.10</ecNumber>
    </recommendedName>
    <alternativeName>
        <fullName evidence="1">IGP synthase cyclase subunit</fullName>
    </alternativeName>
    <alternativeName>
        <fullName evidence="1">IGP synthase subunit HisF</fullName>
    </alternativeName>
    <alternativeName>
        <fullName evidence="1">ImGP synthase subunit HisF</fullName>
        <shortName evidence="1">IGPS subunit HisF</shortName>
    </alternativeName>
</protein>
<evidence type="ECO:0000255" key="1">
    <source>
        <dbReference type="HAMAP-Rule" id="MF_01013"/>
    </source>
</evidence>
<gene>
    <name evidence="1" type="primary">hisF</name>
    <name type="ordered locus">SPAB_00956</name>
</gene>
<organism>
    <name type="scientific">Salmonella paratyphi B (strain ATCC BAA-1250 / SPB7)</name>
    <dbReference type="NCBI Taxonomy" id="1016998"/>
    <lineage>
        <taxon>Bacteria</taxon>
        <taxon>Pseudomonadati</taxon>
        <taxon>Pseudomonadota</taxon>
        <taxon>Gammaproteobacteria</taxon>
        <taxon>Enterobacterales</taxon>
        <taxon>Enterobacteriaceae</taxon>
        <taxon>Salmonella</taxon>
    </lineage>
</organism>
<keyword id="KW-0028">Amino-acid biosynthesis</keyword>
<keyword id="KW-0963">Cytoplasm</keyword>
<keyword id="KW-0368">Histidine biosynthesis</keyword>
<keyword id="KW-0456">Lyase</keyword>
<dbReference type="EC" id="4.3.2.10" evidence="1"/>
<dbReference type="EMBL" id="CP000886">
    <property type="protein sequence ID" value="ABX66378.1"/>
    <property type="molecule type" value="Genomic_DNA"/>
</dbReference>
<dbReference type="RefSeq" id="WP_000880125.1">
    <property type="nucleotide sequence ID" value="NC_010102.1"/>
</dbReference>
<dbReference type="SMR" id="A9N7S0"/>
<dbReference type="KEGG" id="spq:SPAB_00956"/>
<dbReference type="PATRIC" id="fig|1016998.12.peg.899"/>
<dbReference type="HOGENOM" id="CLU_048577_4_0_6"/>
<dbReference type="BioCyc" id="SENT1016998:SPAB_RS03960-MONOMER"/>
<dbReference type="UniPathway" id="UPA00031">
    <property type="reaction ID" value="UER00010"/>
</dbReference>
<dbReference type="Proteomes" id="UP000008556">
    <property type="component" value="Chromosome"/>
</dbReference>
<dbReference type="GO" id="GO:0005737">
    <property type="term" value="C:cytoplasm"/>
    <property type="evidence" value="ECO:0007669"/>
    <property type="project" value="UniProtKB-SubCell"/>
</dbReference>
<dbReference type="GO" id="GO:0000107">
    <property type="term" value="F:imidazoleglycerol-phosphate synthase activity"/>
    <property type="evidence" value="ECO:0007669"/>
    <property type="project" value="UniProtKB-UniRule"/>
</dbReference>
<dbReference type="GO" id="GO:0016829">
    <property type="term" value="F:lyase activity"/>
    <property type="evidence" value="ECO:0007669"/>
    <property type="project" value="UniProtKB-KW"/>
</dbReference>
<dbReference type="GO" id="GO:0000105">
    <property type="term" value="P:L-histidine biosynthetic process"/>
    <property type="evidence" value="ECO:0007669"/>
    <property type="project" value="UniProtKB-UniRule"/>
</dbReference>
<dbReference type="CDD" id="cd04731">
    <property type="entry name" value="HisF"/>
    <property type="match status" value="1"/>
</dbReference>
<dbReference type="FunFam" id="3.20.20.70:FF:000006">
    <property type="entry name" value="Imidazole glycerol phosphate synthase subunit HisF"/>
    <property type="match status" value="1"/>
</dbReference>
<dbReference type="Gene3D" id="3.20.20.70">
    <property type="entry name" value="Aldolase class I"/>
    <property type="match status" value="1"/>
</dbReference>
<dbReference type="HAMAP" id="MF_01013">
    <property type="entry name" value="HisF"/>
    <property type="match status" value="1"/>
</dbReference>
<dbReference type="InterPro" id="IPR013785">
    <property type="entry name" value="Aldolase_TIM"/>
</dbReference>
<dbReference type="InterPro" id="IPR006062">
    <property type="entry name" value="His_biosynth"/>
</dbReference>
<dbReference type="InterPro" id="IPR004651">
    <property type="entry name" value="HisF"/>
</dbReference>
<dbReference type="InterPro" id="IPR050064">
    <property type="entry name" value="IGPS_HisA/HisF"/>
</dbReference>
<dbReference type="InterPro" id="IPR011060">
    <property type="entry name" value="RibuloseP-bd_barrel"/>
</dbReference>
<dbReference type="NCBIfam" id="TIGR00735">
    <property type="entry name" value="hisF"/>
    <property type="match status" value="1"/>
</dbReference>
<dbReference type="PANTHER" id="PTHR21235:SF2">
    <property type="entry name" value="IMIDAZOLE GLYCEROL PHOSPHATE SYNTHASE HISHF"/>
    <property type="match status" value="1"/>
</dbReference>
<dbReference type="PANTHER" id="PTHR21235">
    <property type="entry name" value="IMIDAZOLE GLYCEROL PHOSPHATE SYNTHASE SUBUNIT HISF/H IGP SYNTHASE SUBUNIT HISF/H"/>
    <property type="match status" value="1"/>
</dbReference>
<dbReference type="Pfam" id="PF00977">
    <property type="entry name" value="His_biosynth"/>
    <property type="match status" value="1"/>
</dbReference>
<dbReference type="SUPFAM" id="SSF51366">
    <property type="entry name" value="Ribulose-phoshate binding barrel"/>
    <property type="match status" value="1"/>
</dbReference>
<comment type="function">
    <text evidence="1">IGPS catalyzes the conversion of PRFAR and glutamine to IGP, AICAR and glutamate. The HisF subunit catalyzes the cyclization activity that produces IGP and AICAR from PRFAR using the ammonia provided by the HisH subunit.</text>
</comment>
<comment type="catalytic activity">
    <reaction evidence="1">
        <text>5-[(5-phospho-1-deoxy-D-ribulos-1-ylimino)methylamino]-1-(5-phospho-beta-D-ribosyl)imidazole-4-carboxamide + L-glutamine = D-erythro-1-(imidazol-4-yl)glycerol 3-phosphate + 5-amino-1-(5-phospho-beta-D-ribosyl)imidazole-4-carboxamide + L-glutamate + H(+)</text>
        <dbReference type="Rhea" id="RHEA:24793"/>
        <dbReference type="ChEBI" id="CHEBI:15378"/>
        <dbReference type="ChEBI" id="CHEBI:29985"/>
        <dbReference type="ChEBI" id="CHEBI:58278"/>
        <dbReference type="ChEBI" id="CHEBI:58359"/>
        <dbReference type="ChEBI" id="CHEBI:58475"/>
        <dbReference type="ChEBI" id="CHEBI:58525"/>
        <dbReference type="EC" id="4.3.2.10"/>
    </reaction>
</comment>
<comment type="pathway">
    <text evidence="1">Amino-acid biosynthesis; L-histidine biosynthesis; L-histidine from 5-phospho-alpha-D-ribose 1-diphosphate: step 5/9.</text>
</comment>
<comment type="subunit">
    <text evidence="1">Heterodimer of HisH and HisF.</text>
</comment>
<comment type="subcellular location">
    <subcellularLocation>
        <location evidence="1">Cytoplasm</location>
    </subcellularLocation>
</comment>
<comment type="similarity">
    <text evidence="1">Belongs to the HisA/HisF family.</text>
</comment>